<proteinExistence type="evidence at protein level"/>
<dbReference type="EMBL" id="X83502">
    <property type="protein sequence ID" value="CAA58486.1"/>
    <property type="molecule type" value="Genomic_DNA"/>
</dbReference>
<dbReference type="EMBL" id="Z49359">
    <property type="protein sequence ID" value="CAA89377.1"/>
    <property type="molecule type" value="Genomic_DNA"/>
</dbReference>
<dbReference type="EMBL" id="X88851">
    <property type="protein sequence ID" value="CAA61319.1"/>
    <property type="molecule type" value="Genomic_DNA"/>
</dbReference>
<dbReference type="EMBL" id="BK006943">
    <property type="protein sequence ID" value="DAA08715.1"/>
    <property type="molecule type" value="Genomic_DNA"/>
</dbReference>
<dbReference type="PIR" id="S56026">
    <property type="entry name" value="S56026"/>
</dbReference>
<dbReference type="RefSeq" id="NP_012451.1">
    <property type="nucleotide sequence ID" value="NM_001181517.1"/>
</dbReference>
<dbReference type="BioGRID" id="33672">
    <property type="interactions" value="137"/>
</dbReference>
<dbReference type="DIP" id="DIP-1497N"/>
<dbReference type="FunCoup" id="P47029">
    <property type="interactions" value="84"/>
</dbReference>
<dbReference type="IntAct" id="P47029">
    <property type="interactions" value="21"/>
</dbReference>
<dbReference type="MINT" id="P47029"/>
<dbReference type="STRING" id="4932.YJL084C"/>
<dbReference type="GlyGen" id="P47029">
    <property type="glycosylation" value="3 sites, 1 O-linked glycan (3 sites)"/>
</dbReference>
<dbReference type="iPTMnet" id="P47029"/>
<dbReference type="PaxDb" id="4932-YJL084C"/>
<dbReference type="PeptideAtlas" id="P47029"/>
<dbReference type="EnsemblFungi" id="YJL084C_mRNA">
    <property type="protein sequence ID" value="YJL084C"/>
    <property type="gene ID" value="YJL084C"/>
</dbReference>
<dbReference type="GeneID" id="853361"/>
<dbReference type="KEGG" id="sce:YJL084C"/>
<dbReference type="AGR" id="SGD:S000003620"/>
<dbReference type="SGD" id="S000003620">
    <property type="gene designation" value="ALY2"/>
</dbReference>
<dbReference type="VEuPathDB" id="FungiDB:YJL084C"/>
<dbReference type="eggNOG" id="KOG3780">
    <property type="taxonomic scope" value="Eukaryota"/>
</dbReference>
<dbReference type="GeneTree" id="ENSGT00940000176405"/>
<dbReference type="HOGENOM" id="CLU_008578_0_1_1"/>
<dbReference type="InParanoid" id="P47029"/>
<dbReference type="OMA" id="DIINHTW"/>
<dbReference type="OrthoDB" id="2238745at2759"/>
<dbReference type="BioCyc" id="YEAST:G3O-31541-MONOMER"/>
<dbReference type="Reactome" id="R-SCE-844456">
    <property type="pathway name" value="The NLRP3 inflammasome"/>
</dbReference>
<dbReference type="BioGRID-ORCS" id="853361">
    <property type="hits" value="2 hits in 10 CRISPR screens"/>
</dbReference>
<dbReference type="PRO" id="PR:P47029"/>
<dbReference type="Proteomes" id="UP000002311">
    <property type="component" value="Chromosome X"/>
</dbReference>
<dbReference type="RNAct" id="P47029">
    <property type="molecule type" value="protein"/>
</dbReference>
<dbReference type="GO" id="GO:0005737">
    <property type="term" value="C:cytoplasm"/>
    <property type="evidence" value="ECO:0007005"/>
    <property type="project" value="SGD"/>
</dbReference>
<dbReference type="GO" id="GO:0005829">
    <property type="term" value="C:cytosol"/>
    <property type="evidence" value="ECO:0007005"/>
    <property type="project" value="SGD"/>
</dbReference>
<dbReference type="GO" id="GO:0005769">
    <property type="term" value="C:early endosome"/>
    <property type="evidence" value="ECO:0000314"/>
    <property type="project" value="SGD"/>
</dbReference>
<dbReference type="GO" id="GO:0005770">
    <property type="term" value="C:late endosome"/>
    <property type="evidence" value="ECO:0000314"/>
    <property type="project" value="SGD"/>
</dbReference>
<dbReference type="GO" id="GO:0030674">
    <property type="term" value="F:protein-macromolecule adaptor activity"/>
    <property type="evidence" value="ECO:0000353"/>
    <property type="project" value="SGD"/>
</dbReference>
<dbReference type="GO" id="GO:0031625">
    <property type="term" value="F:ubiquitin protein ligase binding"/>
    <property type="evidence" value="ECO:0000353"/>
    <property type="project" value="SGD"/>
</dbReference>
<dbReference type="GO" id="GO:1903577">
    <property type="term" value="P:cellular response to L-arginine"/>
    <property type="evidence" value="ECO:0000315"/>
    <property type="project" value="SGD"/>
</dbReference>
<dbReference type="GO" id="GO:2000397">
    <property type="term" value="P:positive regulation of ubiquitin-dependent endocytosis"/>
    <property type="evidence" value="ECO:0000315"/>
    <property type="project" value="SGD"/>
</dbReference>
<dbReference type="GO" id="GO:0051453">
    <property type="term" value="P:regulation of intracellular pH"/>
    <property type="evidence" value="ECO:0000316"/>
    <property type="project" value="SGD"/>
</dbReference>
<dbReference type="GO" id="GO:0032386">
    <property type="term" value="P:regulation of intracellular transport"/>
    <property type="evidence" value="ECO:0000315"/>
    <property type="project" value="SGD"/>
</dbReference>
<dbReference type="GO" id="GO:0070086">
    <property type="term" value="P:ubiquitin-dependent endocytosis"/>
    <property type="evidence" value="ECO:0000315"/>
    <property type="project" value="SGD"/>
</dbReference>
<dbReference type="Gene3D" id="2.60.40.640">
    <property type="match status" value="2"/>
</dbReference>
<dbReference type="InterPro" id="IPR014752">
    <property type="entry name" value="Arrestin-like_C"/>
</dbReference>
<dbReference type="InterPro" id="IPR011021">
    <property type="entry name" value="Arrestin-like_N"/>
</dbReference>
<dbReference type="InterPro" id="IPR011022">
    <property type="entry name" value="Arrestin_C-like"/>
</dbReference>
<dbReference type="InterPro" id="IPR050357">
    <property type="entry name" value="Arrestin_domain-protein"/>
</dbReference>
<dbReference type="InterPro" id="IPR014756">
    <property type="entry name" value="Ig_E-set"/>
</dbReference>
<dbReference type="PANTHER" id="PTHR11188">
    <property type="entry name" value="ARRESTIN DOMAIN CONTAINING PROTEIN"/>
    <property type="match status" value="1"/>
</dbReference>
<dbReference type="PANTHER" id="PTHR11188:SF174">
    <property type="entry name" value="ARRESTIN-RELATED TRAFFICKING ADAPTER 10-RELATED"/>
    <property type="match status" value="1"/>
</dbReference>
<dbReference type="Pfam" id="PF02752">
    <property type="entry name" value="Arrestin_C"/>
    <property type="match status" value="1"/>
</dbReference>
<dbReference type="Pfam" id="PF00339">
    <property type="entry name" value="Arrestin_N"/>
    <property type="match status" value="1"/>
</dbReference>
<dbReference type="SMART" id="SM01017">
    <property type="entry name" value="Arrestin_C"/>
    <property type="match status" value="1"/>
</dbReference>
<dbReference type="SUPFAM" id="SSF81296">
    <property type="entry name" value="E set domains"/>
    <property type="match status" value="1"/>
</dbReference>
<feature type="chain" id="PRO_0000203049" description="Arrestin-related trafficking adapter 3">
    <location>
        <begin position="1"/>
        <end position="1046"/>
    </location>
</feature>
<feature type="region of interest" description="Disordered" evidence="1">
    <location>
        <begin position="115"/>
        <end position="141"/>
    </location>
</feature>
<feature type="region of interest" description="Disordered" evidence="1">
    <location>
        <begin position="168"/>
        <end position="230"/>
    </location>
</feature>
<feature type="region of interest" description="Disordered" evidence="1">
    <location>
        <begin position="605"/>
        <end position="627"/>
    </location>
</feature>
<feature type="region of interest" description="Disordered" evidence="1">
    <location>
        <begin position="651"/>
        <end position="820"/>
    </location>
</feature>
<feature type="region of interest" description="Disordered" evidence="1">
    <location>
        <begin position="868"/>
        <end position="889"/>
    </location>
</feature>
<feature type="region of interest" description="Disordered" evidence="1">
    <location>
        <begin position="986"/>
        <end position="1017"/>
    </location>
</feature>
<feature type="compositionally biased region" description="Low complexity" evidence="1">
    <location>
        <begin position="128"/>
        <end position="140"/>
    </location>
</feature>
<feature type="compositionally biased region" description="Low complexity" evidence="1">
    <location>
        <begin position="168"/>
        <end position="179"/>
    </location>
</feature>
<feature type="compositionally biased region" description="Low complexity" evidence="1">
    <location>
        <begin position="198"/>
        <end position="210"/>
    </location>
</feature>
<feature type="compositionally biased region" description="Polar residues" evidence="1">
    <location>
        <begin position="605"/>
        <end position="614"/>
    </location>
</feature>
<feature type="compositionally biased region" description="Low complexity" evidence="1">
    <location>
        <begin position="669"/>
        <end position="694"/>
    </location>
</feature>
<feature type="compositionally biased region" description="Basic and acidic residues" evidence="1">
    <location>
        <begin position="734"/>
        <end position="785"/>
    </location>
</feature>
<feature type="compositionally biased region" description="Low complexity" evidence="1">
    <location>
        <begin position="802"/>
        <end position="811"/>
    </location>
</feature>
<feature type="compositionally biased region" description="Polar residues" evidence="1">
    <location>
        <begin position="877"/>
        <end position="889"/>
    </location>
</feature>
<feature type="compositionally biased region" description="Polar residues" evidence="1">
    <location>
        <begin position="996"/>
        <end position="1008"/>
    </location>
</feature>
<feature type="modified residue" description="Phosphoserine" evidence="9 10 11">
    <location>
        <position position="155"/>
    </location>
</feature>
<feature type="modified residue" description="Phosphoserine" evidence="9">
    <location>
        <position position="162"/>
    </location>
</feature>
<feature type="modified residue" description="Phosphoserine" evidence="8">
    <location>
        <position position="213"/>
    </location>
</feature>
<feature type="modified residue" description="Phosphoserine" evidence="11">
    <location>
        <position position="586"/>
    </location>
</feature>
<feature type="modified residue" description="Phosphoserine" evidence="10">
    <location>
        <position position="826"/>
    </location>
</feature>
<feature type="modified residue" description="Phosphoserine" evidence="9 10 11">
    <location>
        <position position="838"/>
    </location>
</feature>
<feature type="modified residue" description="Phosphoserine" evidence="10 11">
    <location>
        <position position="900"/>
    </location>
</feature>
<feature type="modified residue" description="Phosphoserine" evidence="11">
    <location>
        <position position="1022"/>
    </location>
</feature>
<feature type="modified residue" description="Phosphoserine" evidence="11">
    <location>
        <position position="1023"/>
    </location>
</feature>
<feature type="sequence conflict" description="In Ref. 1; CAA58486." evidence="7" ref="1">
    <original>P</original>
    <variation>G</variation>
    <location>
        <position position="852"/>
    </location>
</feature>
<sequence length="1046" mass="117216">MPMDQSISSPLFPMEKDIDIPLDATPLAQSSSLQLFIHLAEPVVFLQGFDPQKTEYPSVVLRGCLVVRILKPTKLKSISLSFKGYSRTEWPEGIPPKRQEFVEIKDIVDHTWALYPPTEQKSKKKMDASAPNESNNAANNFLTKESGASLYRTLSDNETITSRKNSISGLSSLNLSPLGAPGNSSVNVKDRESRQRSRSSSVTSSNGPSRNLSPINLLKRATSPSVSHHNYKPTTTSIFSDLLNNTFTHNDAASHHGHHIPTSSNHLAMTSNNFTSGSGGEFFVFQPGDYIYAFEELIPQAYPESIKADFGFVEYFLFASIERPGAFKSNISARQVVNIVRTQAHNSVEESEPIIISRDWENQLYYDIVIASKDIILDAFLPITFKFAPLDKVTLHRIRIYVTETMEYYCREKKVHRMEPTKKFLLTEQKGPKLPNLPNDANLSKAKNMGNLLQDPKNGDLVNKEYEYQIFIPSRFNNHQQLHPDTSYENIKANHWIKICLRLSRVVDNKRKHYEISIDSPIHVLHRLCSHANTLLPSYDGHPASFPKETDSSISSILESSDDNINLYHNSNIFFPKEVLSSPVLSPNVQPLDILIPHLPSTSLTRNSRQFNRNSKSHPSDNTIFNSAKLKSNIYQPESLQRELASPQAIPLSPITSPMSNMEVPPPDFDFSSDFISDAASGTTTTEVSSSESSILPRDPPSYKDTVLHDNNQKRRPNSKHPTPPSLKASHPNKNSDKNSSETLNKKESMSKIEENKHKRETTPKKRENRDVKSLSTPQREESKDSTSTGNQSNEKNRKRVLSLSSSLHSSPNNSGFAHSALGNLSNESLRSLNRRESVQDNLPSTIRHDNPFFTDLNQVLIEDELKNHDKNELNRHSTNTSSTPASARSSFDYSGINISKDKLNMEPLLSKTETLTNKVNEDSFLRPNDSYVDLLEPSVDTTIDITAPYARNSSAWHPLQNDNDNNQFSPLLGSNENFLNAANAQNSAESDHNNDIFTQGSGLTESSKNSDSEERFISRLSSPEKVLINTLDNESGLQSINESTL</sequence>
<evidence type="ECO:0000256" key="1">
    <source>
        <dbReference type="SAM" id="MobiDB-lite"/>
    </source>
</evidence>
<evidence type="ECO:0000269" key="2">
    <source>
    </source>
</evidence>
<evidence type="ECO:0000269" key="3">
    <source>
    </source>
</evidence>
<evidence type="ECO:0000269" key="4">
    <source>
    </source>
</evidence>
<evidence type="ECO:0000269" key="5">
    <source>
    </source>
</evidence>
<evidence type="ECO:0000269" key="6">
    <source>
    </source>
</evidence>
<evidence type="ECO:0000305" key="7"/>
<evidence type="ECO:0007744" key="8">
    <source>
    </source>
</evidence>
<evidence type="ECO:0007744" key="9">
    <source>
    </source>
</evidence>
<evidence type="ECO:0007744" key="10">
    <source>
    </source>
</evidence>
<evidence type="ECO:0007744" key="11">
    <source>
    </source>
</evidence>
<comment type="function">
    <text evidence="6">May regulate endocytosis by recruiting RSP5 ubiquitin ligase activity to specific plasma membrane proteins in response to extracellular stimuli.</text>
</comment>
<comment type="subunit">
    <text evidence="2 5 6">Interacts with PCL6, PCL7 and RSP5.</text>
</comment>
<comment type="interaction">
    <interactant intactId="EBI-25974">
        <id>P47029</id>
    </interactant>
    <interactant intactId="EBI-16219">
        <id>P39940</id>
        <label>RSP5</label>
    </interactant>
    <organismsDiffer>false</organismsDiffer>
    <experiments>5</experiments>
</comment>
<comment type="subcellular location">
    <subcellularLocation>
        <location evidence="3">Cytoplasm</location>
    </subcellularLocation>
</comment>
<comment type="PTM">
    <text evidence="5">Ubiquitinated by RSP5.</text>
</comment>
<comment type="PTM">
    <text evidence="2">Phosphorylated by the cyclin-CDKs PCL6-PHO85 and PCL7-PHO85.</text>
</comment>
<comment type="miscellaneous">
    <text evidence="4">Present with 49 molecules/cell in log phase SD medium.</text>
</comment>
<comment type="similarity">
    <text evidence="7">Belongs to the ALY1 family.</text>
</comment>
<protein>
    <recommendedName>
        <fullName>Arrestin-related trafficking adapter 3</fullName>
    </recommendedName>
    <alternativeName>
        <fullName>Arrestin-like protein 2</fullName>
    </alternativeName>
</protein>
<keyword id="KW-0963">Cytoplasm</keyword>
<keyword id="KW-0597">Phosphoprotein</keyword>
<keyword id="KW-1185">Reference proteome</keyword>
<keyword id="KW-0832">Ubl conjugation</keyword>
<accession>P47029</accession>
<accession>D6VW99</accession>
<accession>Q05742</accession>
<organism>
    <name type="scientific">Saccharomyces cerevisiae (strain ATCC 204508 / S288c)</name>
    <name type="common">Baker's yeast</name>
    <dbReference type="NCBI Taxonomy" id="559292"/>
    <lineage>
        <taxon>Eukaryota</taxon>
        <taxon>Fungi</taxon>
        <taxon>Dikarya</taxon>
        <taxon>Ascomycota</taxon>
        <taxon>Saccharomycotina</taxon>
        <taxon>Saccharomycetes</taxon>
        <taxon>Saccharomycetales</taxon>
        <taxon>Saccharomycetaceae</taxon>
        <taxon>Saccharomyces</taxon>
    </lineage>
</organism>
<reference key="1">
    <citation type="journal article" date="1995" name="Yeast">
        <title>Sequence analysis of a 33.1 kb fragment from the left arm of Saccharomyces cerevisiae chromosome X, including putative proteins with leucine zippers, a fungal Zn(II)2-Cys6 binuclear cluster domain and a putative alpha 2-SCB-alpha 2 binding site.</title>
        <authorList>
            <person name="Miosga T."/>
            <person name="Schaaff-Gerstenschlaeger I."/>
            <person name="Chalwatzis N."/>
            <person name="Baur A."/>
            <person name="Boles E."/>
            <person name="Fournier C."/>
            <person name="Schmitt S."/>
            <person name="Velten C."/>
            <person name="Wilhelm N."/>
            <person name="Zimmermann F.K."/>
        </authorList>
    </citation>
    <scope>NUCLEOTIDE SEQUENCE [GENOMIC DNA]</scope>
    <source>
        <strain>ATCC 204508 / S288c</strain>
    </source>
</reference>
<reference key="2">
    <citation type="journal article" date="1996" name="EMBO J.">
        <title>Complete nucleotide sequence of Saccharomyces cerevisiae chromosome X.</title>
        <authorList>
            <person name="Galibert F."/>
            <person name="Alexandraki D."/>
            <person name="Baur A."/>
            <person name="Boles E."/>
            <person name="Chalwatzis N."/>
            <person name="Chuat J.-C."/>
            <person name="Coster F."/>
            <person name="Cziepluch C."/>
            <person name="de Haan M."/>
            <person name="Domdey H."/>
            <person name="Durand P."/>
            <person name="Entian K.-D."/>
            <person name="Gatius M."/>
            <person name="Goffeau A."/>
            <person name="Grivell L.A."/>
            <person name="Hennemann A."/>
            <person name="Herbert C.J."/>
            <person name="Heumann K."/>
            <person name="Hilger F."/>
            <person name="Hollenberg C.P."/>
            <person name="Huang M.-E."/>
            <person name="Jacq C."/>
            <person name="Jauniaux J.-C."/>
            <person name="Katsoulou C."/>
            <person name="Kirchrath L."/>
            <person name="Kleine K."/>
            <person name="Kordes E."/>
            <person name="Koetter P."/>
            <person name="Liebl S."/>
            <person name="Louis E.J."/>
            <person name="Manus V."/>
            <person name="Mewes H.-W."/>
            <person name="Miosga T."/>
            <person name="Obermaier B."/>
            <person name="Perea J."/>
            <person name="Pohl T.M."/>
            <person name="Portetelle D."/>
            <person name="Pujol A."/>
            <person name="Purnelle B."/>
            <person name="Ramezani Rad M."/>
            <person name="Rasmussen S.W."/>
            <person name="Rose M."/>
            <person name="Rossau R."/>
            <person name="Schaaff-Gerstenschlaeger I."/>
            <person name="Smits P.H.M."/>
            <person name="Scarcez T."/>
            <person name="Soriano N."/>
            <person name="To Van D."/>
            <person name="Tzermia M."/>
            <person name="Van Broekhoven A."/>
            <person name="Vandenbol M."/>
            <person name="Wedler H."/>
            <person name="von Wettstein D."/>
            <person name="Wambutt R."/>
            <person name="Zagulski M."/>
            <person name="Zollner A."/>
            <person name="Karpfinger-Hartl L."/>
        </authorList>
    </citation>
    <scope>NUCLEOTIDE SEQUENCE [LARGE SCALE GENOMIC DNA]</scope>
    <source>
        <strain>ATCC 204508 / S288c</strain>
    </source>
</reference>
<reference key="3">
    <citation type="journal article" date="2014" name="G3 (Bethesda)">
        <title>The reference genome sequence of Saccharomyces cerevisiae: Then and now.</title>
        <authorList>
            <person name="Engel S.R."/>
            <person name="Dietrich F.S."/>
            <person name="Fisk D.G."/>
            <person name="Binkley G."/>
            <person name="Balakrishnan R."/>
            <person name="Costanzo M.C."/>
            <person name="Dwight S.S."/>
            <person name="Hitz B.C."/>
            <person name="Karra K."/>
            <person name="Nash R.S."/>
            <person name="Weng S."/>
            <person name="Wong E.D."/>
            <person name="Lloyd P."/>
            <person name="Skrzypek M.S."/>
            <person name="Miyasato S.R."/>
            <person name="Simison M."/>
            <person name="Cherry J.M."/>
        </authorList>
    </citation>
    <scope>GENOME REANNOTATION</scope>
    <source>
        <strain>ATCC 204508 / S288c</strain>
    </source>
</reference>
<reference key="4">
    <citation type="journal article" date="2002" name="Sheng Wu Hua Xue Yu Sheng Wu Wu Li Xue Bao">
        <title>Analysis of phosphorylation of YJL084c, a yeast protein.</title>
        <authorList>
            <person name="Shi X.Z."/>
            <person name="Ao S.Z."/>
        </authorList>
    </citation>
    <scope>PHOSPHORYLATION</scope>
    <scope>INTERACTION WITH PCL6 AND PCL7</scope>
</reference>
<reference key="5">
    <citation type="journal article" date="2003" name="Nature">
        <title>Global analysis of protein localization in budding yeast.</title>
        <authorList>
            <person name="Huh W.-K."/>
            <person name="Falvo J.V."/>
            <person name="Gerke L.C."/>
            <person name="Carroll A.S."/>
            <person name="Howson R.W."/>
            <person name="Weissman J.S."/>
            <person name="O'Shea E.K."/>
        </authorList>
    </citation>
    <scope>SUBCELLULAR LOCATION [LARGE SCALE ANALYSIS]</scope>
</reference>
<reference key="6">
    <citation type="journal article" date="2003" name="Nature">
        <title>Global analysis of protein expression in yeast.</title>
        <authorList>
            <person name="Ghaemmaghami S."/>
            <person name="Huh W.-K."/>
            <person name="Bower K."/>
            <person name="Howson R.W."/>
            <person name="Belle A."/>
            <person name="Dephoure N."/>
            <person name="O'Shea E.K."/>
            <person name="Weissman J.S."/>
        </authorList>
    </citation>
    <scope>LEVEL OF PROTEIN EXPRESSION [LARGE SCALE ANALYSIS]</scope>
</reference>
<reference key="7">
    <citation type="journal article" date="2005" name="Mol. Cell. Proteomics">
        <title>Quantitative phosphoproteomics applied to the yeast pheromone signaling pathway.</title>
        <authorList>
            <person name="Gruhler A."/>
            <person name="Olsen J.V."/>
            <person name="Mohammed S."/>
            <person name="Mortensen P."/>
            <person name="Faergeman N.J."/>
            <person name="Mann M."/>
            <person name="Jensen O.N."/>
        </authorList>
    </citation>
    <scope>PHOSPHORYLATION [LARGE SCALE ANALYSIS] AT SER-213</scope>
    <scope>IDENTIFICATION BY MASS SPECTROMETRY [LARGE SCALE ANALYSIS]</scope>
    <source>
        <strain>YAL6B</strain>
    </source>
</reference>
<reference key="8">
    <citation type="journal article" date="2007" name="J. Proteome Res.">
        <title>Large-scale phosphorylation analysis of alpha-factor-arrested Saccharomyces cerevisiae.</title>
        <authorList>
            <person name="Li X."/>
            <person name="Gerber S.A."/>
            <person name="Rudner A.D."/>
            <person name="Beausoleil S.A."/>
            <person name="Haas W."/>
            <person name="Villen J."/>
            <person name="Elias J.E."/>
            <person name="Gygi S.P."/>
        </authorList>
    </citation>
    <scope>PHOSPHORYLATION [LARGE SCALE ANALYSIS] AT SER-155; SER-162 AND SER-838</scope>
    <scope>IDENTIFICATION BY MASS SPECTROMETRY [LARGE SCALE ANALYSIS]</scope>
    <source>
        <strain>ADR376</strain>
    </source>
</reference>
<reference key="9">
    <citation type="journal article" date="2007" name="Mol. Syst. Biol.">
        <title>Ubiquitination screen using protein microarrays for comprehensive identification of Rsp5 substrates in yeast.</title>
        <authorList>
            <person name="Gupta R."/>
            <person name="Kus B."/>
            <person name="Fladd C."/>
            <person name="Wasmuth J."/>
            <person name="Tonikian R."/>
            <person name="Sidhu S."/>
            <person name="Krogan N.J."/>
            <person name="Parkinson J."/>
            <person name="Rotin D."/>
        </authorList>
    </citation>
    <scope>INTERACTION WITH RSP5</scope>
    <scope>UBIQUITINATION BY RSP5</scope>
</reference>
<reference key="10">
    <citation type="journal article" date="2008" name="Cell">
        <title>Arrestin-related ubiquitin-ligase adaptors regulate endocytosis and protein turnover at the cell surface.</title>
        <authorList>
            <person name="Lin C.H."/>
            <person name="MacGurn J.A."/>
            <person name="Chu T."/>
            <person name="Stefan C.J."/>
            <person name="Emr S.D."/>
        </authorList>
    </citation>
    <scope>INTERACTION WITH RPS5</scope>
    <scope>FUNCTION</scope>
</reference>
<reference key="11">
    <citation type="journal article" date="2008" name="Mol. Cell. Proteomics">
        <title>A multidimensional chromatography technology for in-depth phosphoproteome analysis.</title>
        <authorList>
            <person name="Albuquerque C.P."/>
            <person name="Smolka M.B."/>
            <person name="Payne S.H."/>
            <person name="Bafna V."/>
            <person name="Eng J."/>
            <person name="Zhou H."/>
        </authorList>
    </citation>
    <scope>PHOSPHORYLATION [LARGE SCALE ANALYSIS] AT SER-155; SER-826; SER-838 AND SER-900</scope>
    <scope>IDENTIFICATION BY MASS SPECTROMETRY [LARGE SCALE ANALYSIS]</scope>
</reference>
<reference key="12">
    <citation type="journal article" date="2009" name="Science">
        <title>Global analysis of Cdk1 substrate phosphorylation sites provides insights into evolution.</title>
        <authorList>
            <person name="Holt L.J."/>
            <person name="Tuch B.B."/>
            <person name="Villen J."/>
            <person name="Johnson A.D."/>
            <person name="Gygi S.P."/>
            <person name="Morgan D.O."/>
        </authorList>
    </citation>
    <scope>PHOSPHORYLATION [LARGE SCALE ANALYSIS] AT SER-155; SER-586; SER-838; SER-900; SER-1022 AND SER-1023</scope>
    <scope>IDENTIFICATION BY MASS SPECTROMETRY [LARGE SCALE ANALYSIS]</scope>
</reference>
<gene>
    <name type="primary">ALY2</name>
    <name type="synonym">ART3</name>
    <name type="ordered locus">YJL084C</name>
    <name type="ORF">J0934</name>
</gene>
<name>ALY2_YEAST</name>